<sequence length="114" mass="11562">MEYVYAALILNEADEELTEDNITGVLEAAGVDVEESRAKALVAALEDVDIEEAVEEAAAAPAAAPAASGSDDEAAADDGDDDEEADADEAAEAEDAGDDDDEEPSGEGLGDLFG</sequence>
<proteinExistence type="evidence at protein level"/>
<accession>P05768</accession>
<accession>Q9HQL5</accession>
<comment type="function">
    <text evidence="1">Forms part of the ribosomal stalk, playing a central role in the interaction of the ribosome with GTP-bound translation factors.</text>
</comment>
<comment type="subunit">
    <text evidence="1">Part of the 50S ribosomal subunit. Homodimer, it forms part of the ribosomal stalk which helps the ribosome interact with GTP-bound translation factors. Forms a heptameric uL10/P0(P1)2(P1)2(P1)2 complex, where uL10/P0 forms an elongated spine to which the P1 dimers bind in a sequential fashion.</text>
</comment>
<comment type="similarity">
    <text evidence="1">Belongs to the eukaryotic ribosomal protein P1/P2 family.</text>
</comment>
<evidence type="ECO:0000255" key="1">
    <source>
        <dbReference type="HAMAP-Rule" id="MF_01478"/>
    </source>
</evidence>
<evidence type="ECO:0000256" key="2">
    <source>
        <dbReference type="SAM" id="MobiDB-lite"/>
    </source>
</evidence>
<gene>
    <name evidence="1" type="primary">rpl12</name>
    <name type="ordered locus">VNG_1103G</name>
</gene>
<reference key="1">
    <citation type="journal article" date="1988" name="Biochim. Biophys. Acta">
        <title>Molecular cloning and sequence analysis of the ribosomal 'A' protein gene from the archaebacterium, Halobacterium halobium.</title>
        <authorList>
            <person name="Itoh T."/>
            <person name="Kumazaki T."/>
            <person name="Sugiyama M."/>
            <person name="Otaka E."/>
        </authorList>
    </citation>
    <scope>NUCLEOTIDE SEQUENCE [GENOMIC DNA]</scope>
    <source>
        <strain>A9</strain>
    </source>
</reference>
<reference key="2">
    <citation type="journal article" date="1988" name="Eur. J. Biochem.">
        <title>Complete nucleotide sequence of the ribosomal 'A' protein operon from the archaebacterium, Halobacterium halobium.</title>
        <authorList>
            <person name="Itoh T."/>
        </authorList>
    </citation>
    <scope>NUCLEOTIDE SEQUENCE [GENOMIC DNA]</scope>
    <source>
        <strain>R1 / S9</strain>
    </source>
</reference>
<reference key="3">
    <citation type="journal article" date="1989" name="EMBO J.">
        <title>Characterization of the L11, L1, L10 and L12 equivalent ribosomal protein gene cluster of the halophilic archaebacterium Halobacterium cutirubrum.</title>
        <authorList>
            <person name="Shimmin L.C."/>
            <person name="Dennis P.P."/>
        </authorList>
    </citation>
    <scope>NUCLEOTIDE SEQUENCE [GENOMIC DNA]</scope>
    <source>
        <strain>ATCC 33170 / DSM 669 / NCCB 81095 / NRC 34001</strain>
    </source>
</reference>
<reference key="4">
    <citation type="journal article" date="2000" name="Proc. Natl. Acad. Sci. U.S.A.">
        <title>Genome sequence of Halobacterium species NRC-1.</title>
        <authorList>
            <person name="Ng W.V."/>
            <person name="Kennedy S.P."/>
            <person name="Mahairas G.G."/>
            <person name="Berquist B."/>
            <person name="Pan M."/>
            <person name="Shukla H.D."/>
            <person name="Lasky S.R."/>
            <person name="Baliga N.S."/>
            <person name="Thorsson V."/>
            <person name="Sbrogna J."/>
            <person name="Swartzell S."/>
            <person name="Weir D."/>
            <person name="Hall J."/>
            <person name="Dahl T.A."/>
            <person name="Welti R."/>
            <person name="Goo Y.A."/>
            <person name="Leithauser B."/>
            <person name="Keller K."/>
            <person name="Cruz R."/>
            <person name="Danson M.J."/>
            <person name="Hough D.W."/>
            <person name="Maddocks D.G."/>
            <person name="Jablonski P.E."/>
            <person name="Krebs M.P."/>
            <person name="Angevine C.M."/>
            <person name="Dale H."/>
            <person name="Isenbarger T.A."/>
            <person name="Peck R.F."/>
            <person name="Pohlschroder M."/>
            <person name="Spudich J.L."/>
            <person name="Jung K.-H."/>
            <person name="Alam M."/>
            <person name="Freitas T."/>
            <person name="Hou S."/>
            <person name="Daniels C.J."/>
            <person name="Dennis P.P."/>
            <person name="Omer A.D."/>
            <person name="Ebhardt H."/>
            <person name="Lowe T.M."/>
            <person name="Liang P."/>
            <person name="Riley M."/>
            <person name="Hood L."/>
            <person name="DasSarma S."/>
        </authorList>
    </citation>
    <scope>NUCLEOTIDE SEQUENCE [LARGE SCALE GENOMIC DNA]</scope>
    <source>
        <strain>ATCC 700922 / JCM 11081 / NRC-1</strain>
    </source>
</reference>
<reference key="5">
    <citation type="book" date="1980" name="Genetics and evolution of RNA polymerase, tRNA and ribosomes">
        <editorList>
            <person name="Osawa S."/>
            <person name="Ozeki H."/>
            <person name="Uchida H."/>
            <person name="Yura T."/>
        </editorList>
        <authorList>
            <person name="Yaguchi M."/>
            <person name="Matheson A.T."/>
            <person name="Visentin L.P."/>
            <person name="Zuker M."/>
        </authorList>
    </citation>
    <scope>PROTEIN SEQUENCE OF 1-76</scope>
</reference>
<protein>
    <recommendedName>
        <fullName evidence="1">Large ribosomal subunit protein P1</fullName>
    </recommendedName>
    <alternativeName>
        <fullName evidence="1">50S ribosomal protein L12</fullName>
    </alternativeName>
    <alternativeName>
        <fullName>HL20</fullName>
    </alternativeName>
    <alternativeName>
        <fullName>Ribosomal protein 'A'</fullName>
    </alternativeName>
</protein>
<organism>
    <name type="scientific">Halobacterium salinarum (strain ATCC 700922 / JCM 11081 / NRC-1)</name>
    <name type="common">Halobacterium halobium</name>
    <dbReference type="NCBI Taxonomy" id="64091"/>
    <lineage>
        <taxon>Archaea</taxon>
        <taxon>Methanobacteriati</taxon>
        <taxon>Methanobacteriota</taxon>
        <taxon>Stenosarchaea group</taxon>
        <taxon>Halobacteria</taxon>
        <taxon>Halobacteriales</taxon>
        <taxon>Halobacteriaceae</taxon>
        <taxon>Halobacterium</taxon>
        <taxon>Halobacterium salinarum NRC-34001</taxon>
    </lineage>
</organism>
<dbReference type="EMBL" id="X06736">
    <property type="protein sequence ID" value="CAA29915.1"/>
    <property type="molecule type" value="Genomic_DNA"/>
</dbReference>
<dbReference type="EMBL" id="X13008">
    <property type="protein sequence ID" value="CAA31432.1"/>
    <property type="molecule type" value="Genomic_DNA"/>
</dbReference>
<dbReference type="EMBL" id="X15078">
    <property type="protein sequence ID" value="CAA33181.1"/>
    <property type="molecule type" value="Genomic_DNA"/>
</dbReference>
<dbReference type="EMBL" id="AE004437">
    <property type="protein sequence ID" value="AAG19498.1"/>
    <property type="molecule type" value="Genomic_DNA"/>
</dbReference>
<dbReference type="PIR" id="F84266">
    <property type="entry name" value="F84266"/>
</dbReference>
<dbReference type="PIR" id="S01745">
    <property type="entry name" value="R5HS2H"/>
</dbReference>
<dbReference type="SMR" id="P05768"/>
<dbReference type="STRING" id="64091.VNG_1103G"/>
<dbReference type="PaxDb" id="64091-VNG_1103G"/>
<dbReference type="KEGG" id="hal:VNG_1103G"/>
<dbReference type="PATRIC" id="fig|64091.14.peg.844"/>
<dbReference type="HOGENOM" id="CLU_114656_2_0_2"/>
<dbReference type="InParanoid" id="P05768"/>
<dbReference type="OrthoDB" id="3337at2157"/>
<dbReference type="Proteomes" id="UP000000554">
    <property type="component" value="Chromosome"/>
</dbReference>
<dbReference type="GO" id="GO:1990904">
    <property type="term" value="C:ribonucleoprotein complex"/>
    <property type="evidence" value="ECO:0007669"/>
    <property type="project" value="UniProtKB-KW"/>
</dbReference>
<dbReference type="GO" id="GO:0005840">
    <property type="term" value="C:ribosome"/>
    <property type="evidence" value="ECO:0007669"/>
    <property type="project" value="UniProtKB-KW"/>
</dbReference>
<dbReference type="GO" id="GO:0003735">
    <property type="term" value="F:structural constituent of ribosome"/>
    <property type="evidence" value="ECO:0007669"/>
    <property type="project" value="InterPro"/>
</dbReference>
<dbReference type="GO" id="GO:0006414">
    <property type="term" value="P:translational elongation"/>
    <property type="evidence" value="ECO:0007669"/>
    <property type="project" value="InterPro"/>
</dbReference>
<dbReference type="FunFam" id="1.10.10.1410:FF:000002">
    <property type="entry name" value="60S acidic ribosomal protein P2"/>
    <property type="match status" value="1"/>
</dbReference>
<dbReference type="Gene3D" id="1.10.10.1410">
    <property type="match status" value="1"/>
</dbReference>
<dbReference type="HAMAP" id="MF_01478">
    <property type="entry name" value="Ribosomal_L12_arch"/>
    <property type="match status" value="1"/>
</dbReference>
<dbReference type="InterPro" id="IPR038716">
    <property type="entry name" value="P1/P2_N_sf"/>
</dbReference>
<dbReference type="InterPro" id="IPR027534">
    <property type="entry name" value="Ribosomal_P1/P2"/>
</dbReference>
<dbReference type="InterPro" id="IPR022295">
    <property type="entry name" value="Ribosomal_P1_arc"/>
</dbReference>
<dbReference type="NCBIfam" id="TIGR03685">
    <property type="entry name" value="ribo_P1_arch"/>
    <property type="match status" value="1"/>
</dbReference>
<dbReference type="Pfam" id="PF00428">
    <property type="entry name" value="Ribosomal_60s"/>
    <property type="match status" value="1"/>
</dbReference>
<name>RL12_HALSA</name>
<keyword id="KW-0903">Direct protein sequencing</keyword>
<keyword id="KW-1185">Reference proteome</keyword>
<keyword id="KW-0687">Ribonucleoprotein</keyword>
<keyword id="KW-0689">Ribosomal protein</keyword>
<feature type="chain" id="PRO_0000157628" description="Large ribosomal subunit protein P1">
    <location>
        <begin position="1"/>
        <end position="114"/>
    </location>
</feature>
<feature type="region of interest" description="Disordered" evidence="2">
    <location>
        <begin position="55"/>
        <end position="114"/>
    </location>
</feature>
<feature type="compositionally biased region" description="Low complexity" evidence="2">
    <location>
        <begin position="56"/>
        <end position="69"/>
    </location>
</feature>
<feature type="compositionally biased region" description="Acidic residues" evidence="2">
    <location>
        <begin position="70"/>
        <end position="105"/>
    </location>
</feature>